<keyword id="KW-1185">Reference proteome</keyword>
<keyword id="KW-0687">Ribonucleoprotein</keyword>
<keyword id="KW-0689">Ribosomal protein</keyword>
<evidence type="ECO:0000255" key="1">
    <source>
        <dbReference type="HAMAP-Rule" id="MF_00294"/>
    </source>
</evidence>
<evidence type="ECO:0000305" key="2"/>
<gene>
    <name evidence="1" type="primary">rpmG</name>
    <name type="ordered locus">Smlt4598</name>
</gene>
<organism>
    <name type="scientific">Stenotrophomonas maltophilia (strain K279a)</name>
    <dbReference type="NCBI Taxonomy" id="522373"/>
    <lineage>
        <taxon>Bacteria</taxon>
        <taxon>Pseudomonadati</taxon>
        <taxon>Pseudomonadota</taxon>
        <taxon>Gammaproteobacteria</taxon>
        <taxon>Lysobacterales</taxon>
        <taxon>Lysobacteraceae</taxon>
        <taxon>Stenotrophomonas</taxon>
        <taxon>Stenotrophomonas maltophilia group</taxon>
    </lineage>
</organism>
<protein>
    <recommendedName>
        <fullName evidence="1">Large ribosomal subunit protein bL33</fullName>
    </recommendedName>
    <alternativeName>
        <fullName evidence="2">50S ribosomal protein L33</fullName>
    </alternativeName>
</protein>
<accession>B2FNE2</accession>
<dbReference type="EMBL" id="AM743169">
    <property type="protein sequence ID" value="CAQ47953.1"/>
    <property type="molecule type" value="Genomic_DNA"/>
</dbReference>
<dbReference type="SMR" id="B2FNE2"/>
<dbReference type="EnsemblBacteria" id="CAQ47953">
    <property type="protein sequence ID" value="CAQ47953"/>
    <property type="gene ID" value="Smlt4598"/>
</dbReference>
<dbReference type="KEGG" id="sml:Smlt4598"/>
<dbReference type="eggNOG" id="COG0267">
    <property type="taxonomic scope" value="Bacteria"/>
</dbReference>
<dbReference type="HOGENOM" id="CLU_190949_1_1_6"/>
<dbReference type="Proteomes" id="UP000008840">
    <property type="component" value="Chromosome"/>
</dbReference>
<dbReference type="GO" id="GO:0022625">
    <property type="term" value="C:cytosolic large ribosomal subunit"/>
    <property type="evidence" value="ECO:0007669"/>
    <property type="project" value="TreeGrafter"/>
</dbReference>
<dbReference type="GO" id="GO:0003735">
    <property type="term" value="F:structural constituent of ribosome"/>
    <property type="evidence" value="ECO:0007669"/>
    <property type="project" value="InterPro"/>
</dbReference>
<dbReference type="GO" id="GO:0006412">
    <property type="term" value="P:translation"/>
    <property type="evidence" value="ECO:0007669"/>
    <property type="project" value="UniProtKB-UniRule"/>
</dbReference>
<dbReference type="FunFam" id="2.20.28.120:FF:000001">
    <property type="entry name" value="50S ribosomal protein L33"/>
    <property type="match status" value="1"/>
</dbReference>
<dbReference type="Gene3D" id="2.20.28.120">
    <property type="entry name" value="Ribosomal protein L33"/>
    <property type="match status" value="1"/>
</dbReference>
<dbReference type="HAMAP" id="MF_00294">
    <property type="entry name" value="Ribosomal_bL33"/>
    <property type="match status" value="1"/>
</dbReference>
<dbReference type="InterPro" id="IPR001705">
    <property type="entry name" value="Ribosomal_bL33"/>
</dbReference>
<dbReference type="InterPro" id="IPR018264">
    <property type="entry name" value="Ribosomal_bL33_CS"/>
</dbReference>
<dbReference type="InterPro" id="IPR038584">
    <property type="entry name" value="Ribosomal_bL33_sf"/>
</dbReference>
<dbReference type="InterPro" id="IPR011332">
    <property type="entry name" value="Ribosomal_zn-bd"/>
</dbReference>
<dbReference type="NCBIfam" id="NF001860">
    <property type="entry name" value="PRK00595.1"/>
    <property type="match status" value="1"/>
</dbReference>
<dbReference type="NCBIfam" id="TIGR01023">
    <property type="entry name" value="rpmG_bact"/>
    <property type="match status" value="1"/>
</dbReference>
<dbReference type="PANTHER" id="PTHR15238">
    <property type="entry name" value="54S RIBOSOMAL PROTEIN L39, MITOCHONDRIAL"/>
    <property type="match status" value="1"/>
</dbReference>
<dbReference type="PANTHER" id="PTHR15238:SF1">
    <property type="entry name" value="LARGE RIBOSOMAL SUBUNIT PROTEIN BL33M"/>
    <property type="match status" value="1"/>
</dbReference>
<dbReference type="Pfam" id="PF00471">
    <property type="entry name" value="Ribosomal_L33"/>
    <property type="match status" value="1"/>
</dbReference>
<dbReference type="SUPFAM" id="SSF57829">
    <property type="entry name" value="Zn-binding ribosomal proteins"/>
    <property type="match status" value="1"/>
</dbReference>
<dbReference type="PROSITE" id="PS00582">
    <property type="entry name" value="RIBOSOMAL_L33"/>
    <property type="match status" value="1"/>
</dbReference>
<reference key="1">
    <citation type="journal article" date="2008" name="Genome Biol.">
        <title>The complete genome, comparative and functional analysis of Stenotrophomonas maltophilia reveals an organism heavily shielded by drug resistance determinants.</title>
        <authorList>
            <person name="Crossman L.C."/>
            <person name="Gould V.C."/>
            <person name="Dow J.M."/>
            <person name="Vernikos G.S."/>
            <person name="Okazaki A."/>
            <person name="Sebaihia M."/>
            <person name="Saunders D."/>
            <person name="Arrowsmith C."/>
            <person name="Carver T."/>
            <person name="Peters N."/>
            <person name="Adlem E."/>
            <person name="Kerhornou A."/>
            <person name="Lord A."/>
            <person name="Murphy L."/>
            <person name="Seeger K."/>
            <person name="Squares R."/>
            <person name="Rutter S."/>
            <person name="Quail M.A."/>
            <person name="Rajandream M.A."/>
            <person name="Harris D."/>
            <person name="Churcher C."/>
            <person name="Bentley S.D."/>
            <person name="Parkhill J."/>
            <person name="Thomson N.R."/>
            <person name="Avison M.B."/>
        </authorList>
    </citation>
    <scope>NUCLEOTIDE SEQUENCE [LARGE SCALE GENOMIC DNA]</scope>
    <source>
        <strain>K279a</strain>
    </source>
</reference>
<name>RL33_STRMK</name>
<proteinExistence type="inferred from homology"/>
<feature type="chain" id="PRO_0000356703" description="Large ribosomal subunit protein bL33">
    <location>
        <begin position="1"/>
        <end position="54"/>
    </location>
</feature>
<sequence>MAGKRDKVRMISSAGTGHFYTTDKNKKNTPGKMEFLKYDPVVRKHVLYKEGKIK</sequence>
<comment type="similarity">
    <text evidence="1">Belongs to the bacterial ribosomal protein bL33 family.</text>
</comment>